<sequence length="361" mass="39806">MAIEEKLESLTSRHAELSAHLADPTTVSDSKRFAAYSKEFSDLEPVVAAWQAHLAILQQLAETDEMLAEAGDDAEMRQMAREERETLKNKLEQSQKHLHLMLLPKDPNDDKNVILEIRAGTGGEEAALFVSDLFRMYGRFAEIKGWRIEMLSSSATDLGGYKELIAMVQGKGAYMGLKYESGVHRVQRIPVTETGGRIHTSAVTVAILPEADEVELHIEDKDLRIDVYRSSGPGGQSVNTTDSAVRITHLPTGLVVICQDEKSQHKNKAKAMKVLQARLLDAQQQAADSQRAEARKGQVGSGDRSERIRTYNFPQSRVTDHRINLTLHKLDQVLQGGLAEVVDALTAHDQASKLAHLGGGD</sequence>
<proteinExistence type="inferred from homology"/>
<name>RF1_MAGMM</name>
<accession>A0LDT7</accession>
<evidence type="ECO:0000255" key="1">
    <source>
        <dbReference type="HAMAP-Rule" id="MF_00093"/>
    </source>
</evidence>
<evidence type="ECO:0000256" key="2">
    <source>
        <dbReference type="SAM" id="MobiDB-lite"/>
    </source>
</evidence>
<dbReference type="EMBL" id="CP000471">
    <property type="protein sequence ID" value="ABK46130.1"/>
    <property type="molecule type" value="Genomic_DNA"/>
</dbReference>
<dbReference type="RefSeq" id="WP_011715183.1">
    <property type="nucleotide sequence ID" value="NC_008576.1"/>
</dbReference>
<dbReference type="SMR" id="A0LDT7"/>
<dbReference type="STRING" id="156889.Mmc1_3645"/>
<dbReference type="KEGG" id="mgm:Mmc1_3645"/>
<dbReference type="eggNOG" id="COG0216">
    <property type="taxonomic scope" value="Bacteria"/>
</dbReference>
<dbReference type="HOGENOM" id="CLU_036856_0_1_5"/>
<dbReference type="Proteomes" id="UP000002586">
    <property type="component" value="Chromosome"/>
</dbReference>
<dbReference type="GO" id="GO:0005737">
    <property type="term" value="C:cytoplasm"/>
    <property type="evidence" value="ECO:0007669"/>
    <property type="project" value="UniProtKB-SubCell"/>
</dbReference>
<dbReference type="GO" id="GO:0016149">
    <property type="term" value="F:translation release factor activity, codon specific"/>
    <property type="evidence" value="ECO:0007669"/>
    <property type="project" value="UniProtKB-UniRule"/>
</dbReference>
<dbReference type="FunFam" id="3.30.160.20:FF:000004">
    <property type="entry name" value="Peptide chain release factor 1"/>
    <property type="match status" value="1"/>
</dbReference>
<dbReference type="FunFam" id="3.30.70.1660:FF:000002">
    <property type="entry name" value="Peptide chain release factor 1"/>
    <property type="match status" value="1"/>
</dbReference>
<dbReference type="FunFam" id="3.30.70.1660:FF:000004">
    <property type="entry name" value="Peptide chain release factor 1"/>
    <property type="match status" value="1"/>
</dbReference>
<dbReference type="Gene3D" id="3.30.160.20">
    <property type="match status" value="1"/>
</dbReference>
<dbReference type="Gene3D" id="3.30.70.1660">
    <property type="match status" value="1"/>
</dbReference>
<dbReference type="Gene3D" id="6.10.140.1950">
    <property type="match status" value="1"/>
</dbReference>
<dbReference type="HAMAP" id="MF_00093">
    <property type="entry name" value="Rel_fac_1"/>
    <property type="match status" value="1"/>
</dbReference>
<dbReference type="InterPro" id="IPR005139">
    <property type="entry name" value="PCRF"/>
</dbReference>
<dbReference type="InterPro" id="IPR000352">
    <property type="entry name" value="Pep_chain_release_fac_I"/>
</dbReference>
<dbReference type="InterPro" id="IPR045853">
    <property type="entry name" value="Pep_chain_release_fac_I_sf"/>
</dbReference>
<dbReference type="InterPro" id="IPR050057">
    <property type="entry name" value="Prokaryotic/Mito_RF"/>
</dbReference>
<dbReference type="InterPro" id="IPR004373">
    <property type="entry name" value="RF-1"/>
</dbReference>
<dbReference type="NCBIfam" id="TIGR00019">
    <property type="entry name" value="prfA"/>
    <property type="match status" value="1"/>
</dbReference>
<dbReference type="NCBIfam" id="NF001859">
    <property type="entry name" value="PRK00591.1"/>
    <property type="match status" value="1"/>
</dbReference>
<dbReference type="PANTHER" id="PTHR43804">
    <property type="entry name" value="LD18447P"/>
    <property type="match status" value="1"/>
</dbReference>
<dbReference type="PANTHER" id="PTHR43804:SF7">
    <property type="entry name" value="LD18447P"/>
    <property type="match status" value="1"/>
</dbReference>
<dbReference type="Pfam" id="PF03462">
    <property type="entry name" value="PCRF"/>
    <property type="match status" value="1"/>
</dbReference>
<dbReference type="Pfam" id="PF00472">
    <property type="entry name" value="RF-1"/>
    <property type="match status" value="1"/>
</dbReference>
<dbReference type="SMART" id="SM00937">
    <property type="entry name" value="PCRF"/>
    <property type="match status" value="1"/>
</dbReference>
<dbReference type="SUPFAM" id="SSF75620">
    <property type="entry name" value="Release factor"/>
    <property type="match status" value="1"/>
</dbReference>
<dbReference type="PROSITE" id="PS00745">
    <property type="entry name" value="RF_PROK_I"/>
    <property type="match status" value="1"/>
</dbReference>
<protein>
    <recommendedName>
        <fullName evidence="1">Peptide chain release factor 1</fullName>
        <shortName evidence="1">RF-1</shortName>
    </recommendedName>
</protein>
<organism>
    <name type="scientific">Magnetococcus marinus (strain ATCC BAA-1437 / JCM 17883 / MC-1)</name>
    <dbReference type="NCBI Taxonomy" id="156889"/>
    <lineage>
        <taxon>Bacteria</taxon>
        <taxon>Pseudomonadati</taxon>
        <taxon>Pseudomonadota</taxon>
        <taxon>Alphaproteobacteria</taxon>
        <taxon>Magnetococcales</taxon>
        <taxon>Magnetococcaceae</taxon>
        <taxon>Magnetococcus</taxon>
    </lineage>
</organism>
<gene>
    <name evidence="1" type="primary">prfA</name>
    <name type="ordered locus">Mmc1_3645</name>
</gene>
<keyword id="KW-0963">Cytoplasm</keyword>
<keyword id="KW-0488">Methylation</keyword>
<keyword id="KW-0648">Protein biosynthesis</keyword>
<keyword id="KW-1185">Reference proteome</keyword>
<comment type="function">
    <text evidence="1">Peptide chain release factor 1 directs the termination of translation in response to the peptide chain termination codons UAG and UAA.</text>
</comment>
<comment type="subcellular location">
    <subcellularLocation>
        <location evidence="1">Cytoplasm</location>
    </subcellularLocation>
</comment>
<comment type="PTM">
    <text evidence="1">Methylated by PrmC. Methylation increases the termination efficiency of RF1.</text>
</comment>
<comment type="similarity">
    <text evidence="1">Belongs to the prokaryotic/mitochondrial release factor family.</text>
</comment>
<reference key="1">
    <citation type="journal article" date="2009" name="Appl. Environ. Microbiol.">
        <title>Complete genome sequence of the chemolithoautotrophic marine magnetotactic coccus strain MC-1.</title>
        <authorList>
            <person name="Schubbe S."/>
            <person name="Williams T.J."/>
            <person name="Xie G."/>
            <person name="Kiss H.E."/>
            <person name="Brettin T.S."/>
            <person name="Martinez D."/>
            <person name="Ross C.A."/>
            <person name="Schuler D."/>
            <person name="Cox B.L."/>
            <person name="Nealson K.H."/>
            <person name="Bazylinski D.A."/>
        </authorList>
    </citation>
    <scope>NUCLEOTIDE SEQUENCE [LARGE SCALE GENOMIC DNA]</scope>
    <source>
        <strain>ATCC BAA-1437 / JCM 17883 / MC-1</strain>
    </source>
</reference>
<feature type="chain" id="PRO_1000117244" description="Peptide chain release factor 1">
    <location>
        <begin position="1"/>
        <end position="361"/>
    </location>
</feature>
<feature type="region of interest" description="Disordered" evidence="2">
    <location>
        <begin position="286"/>
        <end position="306"/>
    </location>
</feature>
<feature type="modified residue" description="N5-methylglutamine" evidence="1">
    <location>
        <position position="236"/>
    </location>
</feature>